<gene>
    <name evidence="1" type="primary">tmk</name>
    <name type="ordered locus">NSE_0547</name>
</gene>
<proteinExistence type="inferred from homology"/>
<sequence>MFIVLEGIDGSGKSTQVKLLSKFLAKDGYPCVLTREPGGTSFAESLRSMILHDPIDPMARLLLIVSARVDHYNKVILPALKEGKVVVCDRFIYSTLAYQGYGDKIDLQTILDLHRLSGCLVEPDLTLLLLGSGHKKLGRDNFERMPREYLSNVCMGYEKIARMYPNIHVIKCMGVGRTSEEIVKIVQGKISEKQTSSCR</sequence>
<evidence type="ECO:0000255" key="1">
    <source>
        <dbReference type="HAMAP-Rule" id="MF_00165"/>
    </source>
</evidence>
<keyword id="KW-0067">ATP-binding</keyword>
<keyword id="KW-0418">Kinase</keyword>
<keyword id="KW-0545">Nucleotide biosynthesis</keyword>
<keyword id="KW-0547">Nucleotide-binding</keyword>
<keyword id="KW-0808">Transferase</keyword>
<reference key="1">
    <citation type="journal article" date="2006" name="PLoS Genet.">
        <title>Comparative genomics of emerging human ehrlichiosis agents.</title>
        <authorList>
            <person name="Dunning Hotopp J.C."/>
            <person name="Lin M."/>
            <person name="Madupu R."/>
            <person name="Crabtree J."/>
            <person name="Angiuoli S.V."/>
            <person name="Eisen J.A."/>
            <person name="Seshadri R."/>
            <person name="Ren Q."/>
            <person name="Wu M."/>
            <person name="Utterback T.R."/>
            <person name="Smith S."/>
            <person name="Lewis M."/>
            <person name="Khouri H."/>
            <person name="Zhang C."/>
            <person name="Niu H."/>
            <person name="Lin Q."/>
            <person name="Ohashi N."/>
            <person name="Zhi N."/>
            <person name="Nelson W.C."/>
            <person name="Brinkac L.M."/>
            <person name="Dodson R.J."/>
            <person name="Rosovitz M.J."/>
            <person name="Sundaram J.P."/>
            <person name="Daugherty S.C."/>
            <person name="Davidsen T."/>
            <person name="Durkin A.S."/>
            <person name="Gwinn M.L."/>
            <person name="Haft D.H."/>
            <person name="Selengut J.D."/>
            <person name="Sullivan S.A."/>
            <person name="Zafar N."/>
            <person name="Zhou L."/>
            <person name="Benahmed F."/>
            <person name="Forberger H."/>
            <person name="Halpin R."/>
            <person name="Mulligan S."/>
            <person name="Robinson J."/>
            <person name="White O."/>
            <person name="Rikihisa Y."/>
            <person name="Tettelin H."/>
        </authorList>
    </citation>
    <scope>NUCLEOTIDE SEQUENCE [LARGE SCALE GENOMIC DNA]</scope>
    <source>
        <strain>ATCC VR-367 / Miyayama</strain>
    </source>
</reference>
<feature type="chain" id="PRO_1000023233" description="Thymidylate kinase">
    <location>
        <begin position="1"/>
        <end position="199"/>
    </location>
</feature>
<feature type="binding site" evidence="1">
    <location>
        <begin position="7"/>
        <end position="14"/>
    </location>
    <ligand>
        <name>ATP</name>
        <dbReference type="ChEBI" id="CHEBI:30616"/>
    </ligand>
</feature>
<protein>
    <recommendedName>
        <fullName evidence="1">Thymidylate kinase</fullName>
        <ecNumber evidence="1">2.7.4.9</ecNumber>
    </recommendedName>
    <alternativeName>
        <fullName evidence="1">dTMP kinase</fullName>
    </alternativeName>
</protein>
<dbReference type="EC" id="2.7.4.9" evidence="1"/>
<dbReference type="EMBL" id="CP000237">
    <property type="protein sequence ID" value="ABD46241.1"/>
    <property type="molecule type" value="Genomic_DNA"/>
</dbReference>
<dbReference type="RefSeq" id="WP_011451936.1">
    <property type="nucleotide sequence ID" value="NC_007798.1"/>
</dbReference>
<dbReference type="SMR" id="Q2GDL6"/>
<dbReference type="STRING" id="222891.NSE_0547"/>
<dbReference type="KEGG" id="nse:NSE_0547"/>
<dbReference type="eggNOG" id="COG0125">
    <property type="taxonomic scope" value="Bacteria"/>
</dbReference>
<dbReference type="HOGENOM" id="CLU_049131_0_2_5"/>
<dbReference type="OrthoDB" id="9774907at2"/>
<dbReference type="Proteomes" id="UP000001942">
    <property type="component" value="Chromosome"/>
</dbReference>
<dbReference type="GO" id="GO:0005829">
    <property type="term" value="C:cytosol"/>
    <property type="evidence" value="ECO:0007669"/>
    <property type="project" value="TreeGrafter"/>
</dbReference>
<dbReference type="GO" id="GO:0005524">
    <property type="term" value="F:ATP binding"/>
    <property type="evidence" value="ECO:0007669"/>
    <property type="project" value="UniProtKB-UniRule"/>
</dbReference>
<dbReference type="GO" id="GO:0004798">
    <property type="term" value="F:dTMP kinase activity"/>
    <property type="evidence" value="ECO:0007669"/>
    <property type="project" value="UniProtKB-UniRule"/>
</dbReference>
<dbReference type="GO" id="GO:0006233">
    <property type="term" value="P:dTDP biosynthetic process"/>
    <property type="evidence" value="ECO:0007669"/>
    <property type="project" value="InterPro"/>
</dbReference>
<dbReference type="GO" id="GO:0006235">
    <property type="term" value="P:dTTP biosynthetic process"/>
    <property type="evidence" value="ECO:0007669"/>
    <property type="project" value="UniProtKB-UniRule"/>
</dbReference>
<dbReference type="GO" id="GO:0006227">
    <property type="term" value="P:dUDP biosynthetic process"/>
    <property type="evidence" value="ECO:0007669"/>
    <property type="project" value="TreeGrafter"/>
</dbReference>
<dbReference type="CDD" id="cd01672">
    <property type="entry name" value="TMPK"/>
    <property type="match status" value="1"/>
</dbReference>
<dbReference type="Gene3D" id="3.40.50.300">
    <property type="entry name" value="P-loop containing nucleotide triphosphate hydrolases"/>
    <property type="match status" value="1"/>
</dbReference>
<dbReference type="HAMAP" id="MF_00165">
    <property type="entry name" value="Thymidylate_kinase"/>
    <property type="match status" value="1"/>
</dbReference>
<dbReference type="InterPro" id="IPR027417">
    <property type="entry name" value="P-loop_NTPase"/>
</dbReference>
<dbReference type="InterPro" id="IPR039430">
    <property type="entry name" value="Thymidylate_kin-like_dom"/>
</dbReference>
<dbReference type="InterPro" id="IPR018095">
    <property type="entry name" value="Thymidylate_kin_CS"/>
</dbReference>
<dbReference type="InterPro" id="IPR018094">
    <property type="entry name" value="Thymidylate_kinase"/>
</dbReference>
<dbReference type="NCBIfam" id="TIGR00041">
    <property type="entry name" value="DTMP_kinase"/>
    <property type="match status" value="1"/>
</dbReference>
<dbReference type="PANTHER" id="PTHR10344">
    <property type="entry name" value="THYMIDYLATE KINASE"/>
    <property type="match status" value="1"/>
</dbReference>
<dbReference type="PANTHER" id="PTHR10344:SF4">
    <property type="entry name" value="UMP-CMP KINASE 2, MITOCHONDRIAL"/>
    <property type="match status" value="1"/>
</dbReference>
<dbReference type="Pfam" id="PF02223">
    <property type="entry name" value="Thymidylate_kin"/>
    <property type="match status" value="1"/>
</dbReference>
<dbReference type="SUPFAM" id="SSF52540">
    <property type="entry name" value="P-loop containing nucleoside triphosphate hydrolases"/>
    <property type="match status" value="1"/>
</dbReference>
<dbReference type="PROSITE" id="PS01331">
    <property type="entry name" value="THYMIDYLATE_KINASE"/>
    <property type="match status" value="1"/>
</dbReference>
<accession>Q2GDL6</accession>
<comment type="function">
    <text evidence="1">Phosphorylation of dTMP to form dTDP in both de novo and salvage pathways of dTTP synthesis.</text>
</comment>
<comment type="catalytic activity">
    <reaction evidence="1">
        <text>dTMP + ATP = dTDP + ADP</text>
        <dbReference type="Rhea" id="RHEA:13517"/>
        <dbReference type="ChEBI" id="CHEBI:30616"/>
        <dbReference type="ChEBI" id="CHEBI:58369"/>
        <dbReference type="ChEBI" id="CHEBI:63528"/>
        <dbReference type="ChEBI" id="CHEBI:456216"/>
        <dbReference type="EC" id="2.7.4.9"/>
    </reaction>
</comment>
<comment type="similarity">
    <text evidence="1">Belongs to the thymidylate kinase family.</text>
</comment>
<organism>
    <name type="scientific">Neorickettsia sennetsu (strain ATCC VR-367 / Miyayama)</name>
    <name type="common">Ehrlichia sennetsu</name>
    <dbReference type="NCBI Taxonomy" id="222891"/>
    <lineage>
        <taxon>Bacteria</taxon>
        <taxon>Pseudomonadati</taxon>
        <taxon>Pseudomonadota</taxon>
        <taxon>Alphaproteobacteria</taxon>
        <taxon>Rickettsiales</taxon>
        <taxon>Anaplasmataceae</taxon>
        <taxon>Neorickettsia</taxon>
    </lineage>
</organism>
<name>KTHY_NEOSM</name>